<keyword id="KW-0285">Flavoprotein</keyword>
<keyword id="KW-0288">FMN</keyword>
<keyword id="KW-0521">NADP</keyword>
<keyword id="KW-0560">Oxidoreductase</keyword>
<keyword id="KW-1185">Reference proteome</keyword>
<keyword id="KW-0694">RNA-binding</keyword>
<keyword id="KW-0819">tRNA processing</keyword>
<keyword id="KW-0820">tRNA-binding</keyword>
<evidence type="ECO:0000250" key="1">
    <source>
        <dbReference type="UniProtKB" id="P33371"/>
    </source>
</evidence>
<evidence type="ECO:0000250" key="2">
    <source>
        <dbReference type="UniProtKB" id="Q5SMC7"/>
    </source>
</evidence>
<evidence type="ECO:0000305" key="3"/>
<protein>
    <recommendedName>
        <fullName>Probable tRNA-dihydrouridine synthase 2</fullName>
        <ecNumber>1.3.1.-</ecNumber>
    </recommendedName>
</protein>
<name>DUS2_BACSU</name>
<organism>
    <name type="scientific">Bacillus subtilis (strain 168)</name>
    <dbReference type="NCBI Taxonomy" id="224308"/>
    <lineage>
        <taxon>Bacteria</taxon>
        <taxon>Bacillati</taxon>
        <taxon>Bacillota</taxon>
        <taxon>Bacilli</taxon>
        <taxon>Bacillales</taxon>
        <taxon>Bacillaceae</taxon>
        <taxon>Bacillus</taxon>
    </lineage>
</organism>
<comment type="function">
    <text evidence="1">Catalyzes the synthesis of 5,6-dihydrouridine (D), a modified base found in the D-loop of most tRNAs, via the reduction of the C5-C6 double bond in target uridines.</text>
</comment>
<comment type="catalytic activity">
    <reaction evidence="1">
        <text>a 5,6-dihydrouridine in tRNA + NAD(+) = a uridine in tRNA + NADH + H(+)</text>
        <dbReference type="Rhea" id="RHEA:54452"/>
        <dbReference type="Rhea" id="RHEA-COMP:13339"/>
        <dbReference type="Rhea" id="RHEA-COMP:13887"/>
        <dbReference type="ChEBI" id="CHEBI:15378"/>
        <dbReference type="ChEBI" id="CHEBI:57540"/>
        <dbReference type="ChEBI" id="CHEBI:57945"/>
        <dbReference type="ChEBI" id="CHEBI:65315"/>
        <dbReference type="ChEBI" id="CHEBI:74443"/>
    </reaction>
</comment>
<comment type="catalytic activity">
    <reaction evidence="1">
        <text>a 5,6-dihydrouridine in tRNA + NADP(+) = a uridine in tRNA + NADPH + H(+)</text>
        <dbReference type="Rhea" id="RHEA:23624"/>
        <dbReference type="Rhea" id="RHEA-COMP:13339"/>
        <dbReference type="Rhea" id="RHEA-COMP:13887"/>
        <dbReference type="ChEBI" id="CHEBI:15378"/>
        <dbReference type="ChEBI" id="CHEBI:57783"/>
        <dbReference type="ChEBI" id="CHEBI:58349"/>
        <dbReference type="ChEBI" id="CHEBI:65315"/>
        <dbReference type="ChEBI" id="CHEBI:74443"/>
    </reaction>
</comment>
<comment type="cofactor">
    <cofactor evidence="1">
        <name>FMN</name>
        <dbReference type="ChEBI" id="CHEBI:58210"/>
    </cofactor>
</comment>
<comment type="similarity">
    <text evidence="3">Belongs to the Dus family.</text>
</comment>
<proteinExistence type="inferred from homology"/>
<sequence>MTENFWRELPRPFFVLAPMEDVTDVVFRHVVSEAGRPDVFFTEFTNSESYCHPDGKDSVRGRLTFTEDEQPIVAHIWGDKPENFRKMSIGMAELGFKGLDINMGCPVPNVAGNGKGSGLICRPAVAAELIQAAKAGGLPVSVKTRLGYTDVDEWREWLTHILKQDIANLSIHLRTRAEMSKVDAHWELIPEIKKLRDEVAPDTLLTINGDIPDRQTGLKLAEQYGVDGIMIGRGIFTNPFAFEKEPKEHSSKELLDLLRLHLDLHDEYSKEEARPYKPLPRFFKIYLRGFRGASELRNQCMNTKSTDEVRALLDDFERKYLDGIE</sequence>
<dbReference type="EC" id="1.3.1.-"/>
<dbReference type="EMBL" id="D78509">
    <property type="protein sequence ID" value="BAA24299.1"/>
    <property type="molecule type" value="Genomic_DNA"/>
</dbReference>
<dbReference type="EMBL" id="AL009126">
    <property type="protein sequence ID" value="CAB12632.1"/>
    <property type="molecule type" value="Genomic_DNA"/>
</dbReference>
<dbReference type="PIR" id="E69806">
    <property type="entry name" value="E69806"/>
</dbReference>
<dbReference type="RefSeq" id="WP_003243992.1">
    <property type="nucleotide sequence ID" value="NZ_OZ025638.1"/>
</dbReference>
<dbReference type="SMR" id="O31546"/>
<dbReference type="FunCoup" id="O31546">
    <property type="interactions" value="439"/>
</dbReference>
<dbReference type="STRING" id="224308.BSU08030"/>
<dbReference type="PaxDb" id="224308-BSU08030"/>
<dbReference type="DNASU" id="936154"/>
<dbReference type="EnsemblBacteria" id="CAB12632">
    <property type="protein sequence ID" value="CAB12632"/>
    <property type="gene ID" value="BSU_08030"/>
</dbReference>
<dbReference type="GeneID" id="936154"/>
<dbReference type="KEGG" id="bsu:BSU08030"/>
<dbReference type="PATRIC" id="fig|224308.179.peg.869"/>
<dbReference type="eggNOG" id="COG0042">
    <property type="taxonomic scope" value="Bacteria"/>
</dbReference>
<dbReference type="InParanoid" id="O31546"/>
<dbReference type="OrthoDB" id="9764501at2"/>
<dbReference type="PhylomeDB" id="O31546"/>
<dbReference type="BioCyc" id="BSUB:BSU08030-MONOMER"/>
<dbReference type="Proteomes" id="UP000001570">
    <property type="component" value="Chromosome"/>
</dbReference>
<dbReference type="GO" id="GO:0050660">
    <property type="term" value="F:flavin adenine dinucleotide binding"/>
    <property type="evidence" value="ECO:0007669"/>
    <property type="project" value="InterPro"/>
</dbReference>
<dbReference type="GO" id="GO:0000049">
    <property type="term" value="F:tRNA binding"/>
    <property type="evidence" value="ECO:0007669"/>
    <property type="project" value="UniProtKB-KW"/>
</dbReference>
<dbReference type="GO" id="GO:0017150">
    <property type="term" value="F:tRNA dihydrouridine synthase activity"/>
    <property type="evidence" value="ECO:0007669"/>
    <property type="project" value="InterPro"/>
</dbReference>
<dbReference type="CDD" id="cd02801">
    <property type="entry name" value="DUS_like_FMN"/>
    <property type="match status" value="1"/>
</dbReference>
<dbReference type="Gene3D" id="3.20.20.70">
    <property type="entry name" value="Aldolase class I"/>
    <property type="match status" value="1"/>
</dbReference>
<dbReference type="Gene3D" id="1.10.1200.80">
    <property type="entry name" value="Putative flavin oxidoreducatase, domain 2"/>
    <property type="match status" value="1"/>
</dbReference>
<dbReference type="InterPro" id="IPR013785">
    <property type="entry name" value="Aldolase_TIM"/>
</dbReference>
<dbReference type="InterPro" id="IPR035587">
    <property type="entry name" value="DUS-like_FMN-bd"/>
</dbReference>
<dbReference type="InterPro" id="IPR001269">
    <property type="entry name" value="DUS_fam"/>
</dbReference>
<dbReference type="InterPro" id="IPR024036">
    <property type="entry name" value="tRNA-dHydroUridine_Synthase_C"/>
</dbReference>
<dbReference type="InterPro" id="IPR018517">
    <property type="entry name" value="tRNA_hU_synthase_CS"/>
</dbReference>
<dbReference type="PANTHER" id="PTHR11082:SF25">
    <property type="entry name" value="DUS-LIKE FMN-BINDING DOMAIN-CONTAINING PROTEIN"/>
    <property type="match status" value="1"/>
</dbReference>
<dbReference type="PANTHER" id="PTHR11082">
    <property type="entry name" value="TRNA-DIHYDROURIDINE SYNTHASE"/>
    <property type="match status" value="1"/>
</dbReference>
<dbReference type="Pfam" id="PF01207">
    <property type="entry name" value="Dus"/>
    <property type="match status" value="1"/>
</dbReference>
<dbReference type="PIRSF" id="PIRSF006621">
    <property type="entry name" value="Dus"/>
    <property type="match status" value="1"/>
</dbReference>
<dbReference type="SUPFAM" id="SSF51395">
    <property type="entry name" value="FMN-linked oxidoreductases"/>
    <property type="match status" value="1"/>
</dbReference>
<dbReference type="PROSITE" id="PS01136">
    <property type="entry name" value="UPF0034"/>
    <property type="match status" value="1"/>
</dbReference>
<reference key="1">
    <citation type="journal article" date="1996" name="Microbiology">
        <title>Cloning and sequencing of a 40.6 kb segment in the 73 degrees-76 degrees region of the Bacillus subtilis chromosome containing genes for trehalose metabolism and acetoin utilization.</title>
        <authorList>
            <person name="Yamamoto H."/>
            <person name="Uchiyama S."/>
            <person name="Sekiguchi J."/>
        </authorList>
    </citation>
    <scope>NUCLEOTIDE SEQUENCE [GENOMIC DNA]</scope>
    <source>
        <strain>168 / AC327</strain>
    </source>
</reference>
<reference key="2">
    <citation type="journal article" date="1997" name="Nature">
        <title>The complete genome sequence of the Gram-positive bacterium Bacillus subtilis.</title>
        <authorList>
            <person name="Kunst F."/>
            <person name="Ogasawara N."/>
            <person name="Moszer I."/>
            <person name="Albertini A.M."/>
            <person name="Alloni G."/>
            <person name="Azevedo V."/>
            <person name="Bertero M.G."/>
            <person name="Bessieres P."/>
            <person name="Bolotin A."/>
            <person name="Borchert S."/>
            <person name="Borriss R."/>
            <person name="Boursier L."/>
            <person name="Brans A."/>
            <person name="Braun M."/>
            <person name="Brignell S.C."/>
            <person name="Bron S."/>
            <person name="Brouillet S."/>
            <person name="Bruschi C.V."/>
            <person name="Caldwell B."/>
            <person name="Capuano V."/>
            <person name="Carter N.M."/>
            <person name="Choi S.-K."/>
            <person name="Codani J.-J."/>
            <person name="Connerton I.F."/>
            <person name="Cummings N.J."/>
            <person name="Daniel R.A."/>
            <person name="Denizot F."/>
            <person name="Devine K.M."/>
            <person name="Duesterhoeft A."/>
            <person name="Ehrlich S.D."/>
            <person name="Emmerson P.T."/>
            <person name="Entian K.-D."/>
            <person name="Errington J."/>
            <person name="Fabret C."/>
            <person name="Ferrari E."/>
            <person name="Foulger D."/>
            <person name="Fritz C."/>
            <person name="Fujita M."/>
            <person name="Fujita Y."/>
            <person name="Fuma S."/>
            <person name="Galizzi A."/>
            <person name="Galleron N."/>
            <person name="Ghim S.-Y."/>
            <person name="Glaser P."/>
            <person name="Goffeau A."/>
            <person name="Golightly E.J."/>
            <person name="Grandi G."/>
            <person name="Guiseppi G."/>
            <person name="Guy B.J."/>
            <person name="Haga K."/>
            <person name="Haiech J."/>
            <person name="Harwood C.R."/>
            <person name="Henaut A."/>
            <person name="Hilbert H."/>
            <person name="Holsappel S."/>
            <person name="Hosono S."/>
            <person name="Hullo M.-F."/>
            <person name="Itaya M."/>
            <person name="Jones L.-M."/>
            <person name="Joris B."/>
            <person name="Karamata D."/>
            <person name="Kasahara Y."/>
            <person name="Klaerr-Blanchard M."/>
            <person name="Klein C."/>
            <person name="Kobayashi Y."/>
            <person name="Koetter P."/>
            <person name="Koningstein G."/>
            <person name="Krogh S."/>
            <person name="Kumano M."/>
            <person name="Kurita K."/>
            <person name="Lapidus A."/>
            <person name="Lardinois S."/>
            <person name="Lauber J."/>
            <person name="Lazarevic V."/>
            <person name="Lee S.-M."/>
            <person name="Levine A."/>
            <person name="Liu H."/>
            <person name="Masuda S."/>
            <person name="Mauel C."/>
            <person name="Medigue C."/>
            <person name="Medina N."/>
            <person name="Mellado R.P."/>
            <person name="Mizuno M."/>
            <person name="Moestl D."/>
            <person name="Nakai S."/>
            <person name="Noback M."/>
            <person name="Noone D."/>
            <person name="O'Reilly M."/>
            <person name="Ogawa K."/>
            <person name="Ogiwara A."/>
            <person name="Oudega B."/>
            <person name="Park S.-H."/>
            <person name="Parro V."/>
            <person name="Pohl T.M."/>
            <person name="Portetelle D."/>
            <person name="Porwollik S."/>
            <person name="Prescott A.M."/>
            <person name="Presecan E."/>
            <person name="Pujic P."/>
            <person name="Purnelle B."/>
            <person name="Rapoport G."/>
            <person name="Rey M."/>
            <person name="Reynolds S."/>
            <person name="Rieger M."/>
            <person name="Rivolta C."/>
            <person name="Rocha E."/>
            <person name="Roche B."/>
            <person name="Rose M."/>
            <person name="Sadaie Y."/>
            <person name="Sato T."/>
            <person name="Scanlan E."/>
            <person name="Schleich S."/>
            <person name="Schroeter R."/>
            <person name="Scoffone F."/>
            <person name="Sekiguchi J."/>
            <person name="Sekowska A."/>
            <person name="Seror S.J."/>
            <person name="Serror P."/>
            <person name="Shin B.-S."/>
            <person name="Soldo B."/>
            <person name="Sorokin A."/>
            <person name="Tacconi E."/>
            <person name="Takagi T."/>
            <person name="Takahashi H."/>
            <person name="Takemaru K."/>
            <person name="Takeuchi M."/>
            <person name="Tamakoshi A."/>
            <person name="Tanaka T."/>
            <person name="Terpstra P."/>
            <person name="Tognoni A."/>
            <person name="Tosato V."/>
            <person name="Uchiyama S."/>
            <person name="Vandenbol M."/>
            <person name="Vannier F."/>
            <person name="Vassarotti A."/>
            <person name="Viari A."/>
            <person name="Wambutt R."/>
            <person name="Wedler E."/>
            <person name="Wedler H."/>
            <person name="Weitzenegger T."/>
            <person name="Winters P."/>
            <person name="Wipat A."/>
            <person name="Yamamoto H."/>
            <person name="Yamane K."/>
            <person name="Yasumoto K."/>
            <person name="Yata K."/>
            <person name="Yoshida K."/>
            <person name="Yoshikawa H.-F."/>
            <person name="Zumstein E."/>
            <person name="Yoshikawa H."/>
            <person name="Danchin A."/>
        </authorList>
    </citation>
    <scope>NUCLEOTIDE SEQUENCE [LARGE SCALE GENOMIC DNA]</scope>
    <source>
        <strain>168</strain>
    </source>
</reference>
<feature type="chain" id="PRO_0000162133" description="Probable tRNA-dihydrouridine synthase 2">
    <location>
        <begin position="1"/>
        <end position="325"/>
    </location>
</feature>
<feature type="active site" description="Proton donor" evidence="2">
    <location>
        <position position="105"/>
    </location>
</feature>
<feature type="binding site" evidence="1">
    <location>
        <begin position="18"/>
        <end position="20"/>
    </location>
    <ligand>
        <name>FMN</name>
        <dbReference type="ChEBI" id="CHEBI:58210"/>
    </ligand>
</feature>
<feature type="binding site" evidence="1">
    <location>
        <position position="143"/>
    </location>
    <ligand>
        <name>FMN</name>
        <dbReference type="ChEBI" id="CHEBI:58210"/>
    </ligand>
</feature>
<feature type="binding site" evidence="1">
    <location>
        <begin position="208"/>
        <end position="210"/>
    </location>
    <ligand>
        <name>FMN</name>
        <dbReference type="ChEBI" id="CHEBI:58210"/>
    </ligand>
</feature>
<feature type="binding site" evidence="1">
    <location>
        <begin position="232"/>
        <end position="233"/>
    </location>
    <ligand>
        <name>FMN</name>
        <dbReference type="ChEBI" id="CHEBI:58210"/>
    </ligand>
</feature>
<gene>
    <name type="primary">dus2</name>
    <name type="synonym">yfjN</name>
    <name type="ordered locus">BSU08030</name>
</gene>
<accession>O31546</accession>